<keyword id="KW-1185">Reference proteome</keyword>
<keyword id="KW-0687">Ribonucleoprotein</keyword>
<keyword id="KW-0689">Ribosomal protein</keyword>
<keyword id="KW-0694">RNA-binding</keyword>
<keyword id="KW-0699">rRNA-binding</keyword>
<reference key="1">
    <citation type="journal article" date="2009" name="BMC Genomics">
        <title>The complete genome sequence of Staphylothermus marinus reveals differences in sulfur metabolism among heterotrophic Crenarchaeota.</title>
        <authorList>
            <person name="Anderson I.J."/>
            <person name="Dharmarajan L."/>
            <person name="Rodriguez J."/>
            <person name="Hooper S."/>
            <person name="Porat I."/>
            <person name="Ulrich L.E."/>
            <person name="Elkins J.G."/>
            <person name="Mavromatis K."/>
            <person name="Sun H."/>
            <person name="Land M."/>
            <person name="Lapidus A."/>
            <person name="Lucas S."/>
            <person name="Barry K."/>
            <person name="Huber H."/>
            <person name="Zhulin I.B."/>
            <person name="Whitman W.B."/>
            <person name="Mukhopadhyay B."/>
            <person name="Woese C."/>
            <person name="Bristow J."/>
            <person name="Kyrpides N."/>
        </authorList>
    </citation>
    <scope>NUCLEOTIDE SEQUENCE [LARGE SCALE GENOMIC DNA]</scope>
    <source>
        <strain>ATCC 43588 / DSM 3639 / JCM 9404 / F1</strain>
    </source>
</reference>
<reference key="2">
    <citation type="journal article" date="2009" name="Stand. Genomic Sci.">
        <title>Complete genome sequence of Staphylothermus marinus Stetter and Fiala 1986 type strain F1.</title>
        <authorList>
            <person name="Anderson I.J."/>
            <person name="Sun H."/>
            <person name="Lapidus A."/>
            <person name="Copeland A."/>
            <person name="Glavina Del Rio T."/>
            <person name="Tice H."/>
            <person name="Dalin E."/>
            <person name="Lucas S."/>
            <person name="Barry K."/>
            <person name="Land M."/>
            <person name="Richardson P."/>
            <person name="Huber H."/>
            <person name="Kyrpides N.C."/>
        </authorList>
    </citation>
    <scope>NUCLEOTIDE SEQUENCE [LARGE SCALE GENOMIC DNA]</scope>
    <source>
        <strain>ATCC 43588 / DSM 3639 / JCM 9404 / F1</strain>
    </source>
</reference>
<feature type="chain" id="PRO_0000310058" description="Large ribosomal subunit protein uL2">
    <location>
        <begin position="1"/>
        <end position="239"/>
    </location>
</feature>
<feature type="region of interest" description="Disordered" evidence="2">
    <location>
        <begin position="1"/>
        <end position="28"/>
    </location>
</feature>
<feature type="region of interest" description="Disordered" evidence="2">
    <location>
        <begin position="199"/>
        <end position="239"/>
    </location>
</feature>
<feature type="compositionally biased region" description="Basic residues" evidence="2">
    <location>
        <begin position="225"/>
        <end position="239"/>
    </location>
</feature>
<gene>
    <name evidence="1" type="primary">rpl2</name>
    <name type="ordered locus">Smar_1019</name>
</gene>
<name>RL2_STAMF</name>
<organism>
    <name type="scientific">Staphylothermus marinus (strain ATCC 43588 / DSM 3639 / JCM 9404 / F1)</name>
    <dbReference type="NCBI Taxonomy" id="399550"/>
    <lineage>
        <taxon>Archaea</taxon>
        <taxon>Thermoproteota</taxon>
        <taxon>Thermoprotei</taxon>
        <taxon>Desulfurococcales</taxon>
        <taxon>Desulfurococcaceae</taxon>
        <taxon>Staphylothermus</taxon>
    </lineage>
</organism>
<comment type="function">
    <text evidence="1">One of the primary rRNA binding proteins. Required for association of the 30S and 50S subunits to form the 70S ribosome, for tRNA binding and peptide bond formation. It has been suggested to have peptidyltransferase activity; this is somewhat controversial. Makes several contacts with the 16S rRNA in the 70S ribosome.</text>
</comment>
<comment type="subunit">
    <text evidence="1">Part of the 50S ribosomal subunit. Forms a bridge to the 30S subunit in the 70S ribosome.</text>
</comment>
<comment type="similarity">
    <text evidence="1">Belongs to the universal ribosomal protein uL2 family.</text>
</comment>
<accession>A3DNA7</accession>
<protein>
    <recommendedName>
        <fullName evidence="1">Large ribosomal subunit protein uL2</fullName>
    </recommendedName>
    <alternativeName>
        <fullName evidence="3">50S ribosomal protein L2</fullName>
    </alternativeName>
</protein>
<dbReference type="EMBL" id="CP000575">
    <property type="protein sequence ID" value="ABN70117.1"/>
    <property type="molecule type" value="Genomic_DNA"/>
</dbReference>
<dbReference type="RefSeq" id="WP_011839308.1">
    <property type="nucleotide sequence ID" value="NC_009033.1"/>
</dbReference>
<dbReference type="SMR" id="A3DNA7"/>
<dbReference type="STRING" id="399550.Smar_1019"/>
<dbReference type="GeneID" id="4908006"/>
<dbReference type="KEGG" id="smr:Smar_1019"/>
<dbReference type="eggNOG" id="arCOG04067">
    <property type="taxonomic scope" value="Archaea"/>
</dbReference>
<dbReference type="HOGENOM" id="CLU_036235_0_3_2"/>
<dbReference type="OrthoDB" id="5987at2157"/>
<dbReference type="Proteomes" id="UP000000254">
    <property type="component" value="Chromosome"/>
</dbReference>
<dbReference type="GO" id="GO:0022625">
    <property type="term" value="C:cytosolic large ribosomal subunit"/>
    <property type="evidence" value="ECO:0007669"/>
    <property type="project" value="TreeGrafter"/>
</dbReference>
<dbReference type="GO" id="GO:0019843">
    <property type="term" value="F:rRNA binding"/>
    <property type="evidence" value="ECO:0007669"/>
    <property type="project" value="UniProtKB-UniRule"/>
</dbReference>
<dbReference type="GO" id="GO:0003735">
    <property type="term" value="F:structural constituent of ribosome"/>
    <property type="evidence" value="ECO:0007669"/>
    <property type="project" value="InterPro"/>
</dbReference>
<dbReference type="GO" id="GO:0002181">
    <property type="term" value="P:cytoplasmic translation"/>
    <property type="evidence" value="ECO:0007669"/>
    <property type="project" value="TreeGrafter"/>
</dbReference>
<dbReference type="FunFam" id="2.30.30.30:FF:000001">
    <property type="entry name" value="50S ribosomal protein L2"/>
    <property type="match status" value="1"/>
</dbReference>
<dbReference type="FunFam" id="4.10.950.10:FF:000002">
    <property type="entry name" value="60S ribosomal protein L2"/>
    <property type="match status" value="1"/>
</dbReference>
<dbReference type="Gene3D" id="2.30.30.30">
    <property type="match status" value="1"/>
</dbReference>
<dbReference type="Gene3D" id="2.40.50.140">
    <property type="entry name" value="Nucleic acid-binding proteins"/>
    <property type="match status" value="1"/>
</dbReference>
<dbReference type="Gene3D" id="4.10.950.10">
    <property type="entry name" value="Ribosomal protein L2, domain 3"/>
    <property type="match status" value="1"/>
</dbReference>
<dbReference type="HAMAP" id="MF_01320_A">
    <property type="entry name" value="Ribosomal_uL2_A"/>
    <property type="match status" value="1"/>
</dbReference>
<dbReference type="InterPro" id="IPR012340">
    <property type="entry name" value="NA-bd_OB-fold"/>
</dbReference>
<dbReference type="InterPro" id="IPR014722">
    <property type="entry name" value="Rib_uL2_dom2"/>
</dbReference>
<dbReference type="InterPro" id="IPR002171">
    <property type="entry name" value="Ribosomal_uL2"/>
</dbReference>
<dbReference type="InterPro" id="IPR023672">
    <property type="entry name" value="Ribosomal_uL2_arc_euk"/>
</dbReference>
<dbReference type="InterPro" id="IPR022669">
    <property type="entry name" value="Ribosomal_uL2_C"/>
</dbReference>
<dbReference type="InterPro" id="IPR014726">
    <property type="entry name" value="Ribosomal_uL2_dom3"/>
</dbReference>
<dbReference type="InterPro" id="IPR022666">
    <property type="entry name" value="Ribosomal_uL2_RNA-bd_dom"/>
</dbReference>
<dbReference type="InterPro" id="IPR008991">
    <property type="entry name" value="Translation_prot_SH3-like_sf"/>
</dbReference>
<dbReference type="NCBIfam" id="NF007180">
    <property type="entry name" value="PRK09612.1"/>
    <property type="match status" value="1"/>
</dbReference>
<dbReference type="PANTHER" id="PTHR13691:SF16">
    <property type="entry name" value="LARGE RIBOSOMAL SUBUNIT PROTEIN UL2"/>
    <property type="match status" value="1"/>
</dbReference>
<dbReference type="PANTHER" id="PTHR13691">
    <property type="entry name" value="RIBOSOMAL PROTEIN L2"/>
    <property type="match status" value="1"/>
</dbReference>
<dbReference type="Pfam" id="PF00181">
    <property type="entry name" value="Ribosomal_L2"/>
    <property type="match status" value="1"/>
</dbReference>
<dbReference type="Pfam" id="PF03947">
    <property type="entry name" value="Ribosomal_L2_C"/>
    <property type="match status" value="1"/>
</dbReference>
<dbReference type="PIRSF" id="PIRSF002158">
    <property type="entry name" value="Ribosomal_L2"/>
    <property type="match status" value="1"/>
</dbReference>
<dbReference type="SMART" id="SM01383">
    <property type="entry name" value="Ribosomal_L2"/>
    <property type="match status" value="1"/>
</dbReference>
<dbReference type="SMART" id="SM01382">
    <property type="entry name" value="Ribosomal_L2_C"/>
    <property type="match status" value="1"/>
</dbReference>
<dbReference type="SUPFAM" id="SSF50249">
    <property type="entry name" value="Nucleic acid-binding proteins"/>
    <property type="match status" value="1"/>
</dbReference>
<dbReference type="SUPFAM" id="SSF50104">
    <property type="entry name" value="Translation proteins SH3-like domain"/>
    <property type="match status" value="1"/>
</dbReference>
<sequence length="239" mass="25657">MGKRILPQRMGRGTPTFRSPSHRRVGPAKYPPLKLDRTIKGKIIDLLHDPGRWVPLAKIVLEDGTTFLTPAVEGMYVGQIIEIGPDAHISNGNILPIGKIPEGTQIANIEKRPGDGGKFVRSSGTYALIVGRAGTKTQVQLPSGKIIEVPNNARATIGVIAGGGRDEKPLLKAGNAYHKWKVKAKKWPKVRGVAMNAVSHPHGGGSHQHVGKPSTVARETPPGRKVGHIAARRTGRRKG</sequence>
<proteinExistence type="inferred from homology"/>
<evidence type="ECO:0000255" key="1">
    <source>
        <dbReference type="HAMAP-Rule" id="MF_01320"/>
    </source>
</evidence>
<evidence type="ECO:0000256" key="2">
    <source>
        <dbReference type="SAM" id="MobiDB-lite"/>
    </source>
</evidence>
<evidence type="ECO:0000305" key="3"/>